<evidence type="ECO:0000256" key="1">
    <source>
        <dbReference type="SAM" id="MobiDB-lite"/>
    </source>
</evidence>
<evidence type="ECO:0000269" key="2">
    <source>
    </source>
</evidence>
<evidence type="ECO:0000305" key="3"/>
<evidence type="ECO:0000312" key="4">
    <source>
        <dbReference type="HGNC" id="HGNC:24504"/>
    </source>
</evidence>
<organism>
    <name type="scientific">Homo sapiens</name>
    <name type="common">Human</name>
    <dbReference type="NCBI Taxonomy" id="9606"/>
    <lineage>
        <taxon>Eukaryota</taxon>
        <taxon>Metazoa</taxon>
        <taxon>Chordata</taxon>
        <taxon>Craniata</taxon>
        <taxon>Vertebrata</taxon>
        <taxon>Euteleostomi</taxon>
        <taxon>Mammalia</taxon>
        <taxon>Eutheria</taxon>
        <taxon>Euarchontoglires</taxon>
        <taxon>Primates</taxon>
        <taxon>Haplorrhini</taxon>
        <taxon>Catarrhini</taxon>
        <taxon>Hominidae</taxon>
        <taxon>Homo</taxon>
    </lineage>
</organism>
<protein>
    <recommendedName>
        <fullName>Putative protein SPATA31F2P</fullName>
    </recommendedName>
    <alternativeName>
        <fullName>Putative protein FAM205B</fullName>
    </alternativeName>
</protein>
<feature type="chain" id="PRO_0000308580" description="Putative protein SPATA31F2P">
    <location>
        <begin position="1"/>
        <end position="556"/>
    </location>
</feature>
<feature type="region of interest" description="Disordered" evidence="1">
    <location>
        <begin position="133"/>
        <end position="154"/>
    </location>
</feature>
<feature type="region of interest" description="Disordered" evidence="1">
    <location>
        <begin position="210"/>
        <end position="231"/>
    </location>
</feature>
<feature type="compositionally biased region" description="Polar residues" evidence="1">
    <location>
        <begin position="144"/>
        <end position="154"/>
    </location>
</feature>
<feature type="sequence variant" id="VAR_036833" description="In dbSNP:rs521552.">
    <original>N</original>
    <variation>K</variation>
    <location>
        <position position="72"/>
    </location>
</feature>
<feature type="sequence variant" id="VAR_036834" description="In dbSNP:rs524512." evidence="2">
    <original>D</original>
    <variation>E</variation>
    <location>
        <position position="203"/>
    </location>
</feature>
<sequence length="556" mass="61860">MHPMALHMVLPAHLPFLSPEVLRLLEVHVKKWMHFQRWGLPRRVEESLRQLMPNPPLYYQPGNDQPVSFNLNNTSQVSLHRSETISLQTWCSCVAGQPIQTFWVSEWSTMNPEQRHHCQQTPNPMALALPSPALKALSGPHPQSGGQDNDSGSDLQQKYSQLFCGLPSLHSESLVATFMGSQGLPKIENVPKPPLKDPFLFNDLSFPQLLPKTSPQSAPPSSPLSPNWVSPSDHQRAQINVPFLTLAEYEALEWHLLQRQLQLQWGWPAALQRSQHTQCLMQHEPCGKAQSPETTTASQTGKSISVLTRELLFFPEHARKLLEFHIQKQSIRHRWGLPQKIQQSIQLLLTSTDQQTVSSSSTALANVSIPQPVALEANGACDVLSPIAAPVSIPRPHLLTQVKAILQSHIDSKCGQIHQGKIPACVHRSWDCRISGVLAVAPFPCIPESQFLVLQTASDPDLHHKVMPWMPTALDQQQQALPGTVTEHPKLLRVLSVEAIEKLETTLRHKHLAFLSGLPALYYVALPRALAPAVTSQSVITEMEPSPVEIPAEPLI</sequence>
<name>S31F2_HUMAN</name>
<accession>Q63HN1</accession>
<accession>Q6ZRJ7</accession>
<dbReference type="EMBL" id="AK128180">
    <property type="protein sequence ID" value="BAC87313.1"/>
    <property type="molecule type" value="mRNA"/>
</dbReference>
<dbReference type="EMBL" id="BX648118">
    <property type="protein sequence ID" value="CAH56187.1"/>
    <property type="molecule type" value="mRNA"/>
</dbReference>
<dbReference type="EMBL" id="AL589645">
    <property type="status" value="NOT_ANNOTATED_CDS"/>
    <property type="molecule type" value="Genomic_DNA"/>
</dbReference>
<dbReference type="IntAct" id="Q63HN1">
    <property type="interactions" value="1"/>
</dbReference>
<dbReference type="BioMuta" id="HGNC:24504"/>
<dbReference type="DMDM" id="74708372"/>
<dbReference type="MassIVE" id="Q63HN1"/>
<dbReference type="ProteomicsDB" id="65883"/>
<dbReference type="AGR" id="HGNC:24504"/>
<dbReference type="GeneCards" id="SPATA31F2P"/>
<dbReference type="HGNC" id="HGNC:24504">
    <property type="gene designation" value="SPATA31F2P"/>
</dbReference>
<dbReference type="neXtProt" id="NX_Q63HN1"/>
<dbReference type="InParanoid" id="Q63HN1"/>
<dbReference type="PAN-GO" id="Q63HN1">
    <property type="GO annotations" value="0 GO annotations based on evolutionary models"/>
</dbReference>
<dbReference type="PhylomeDB" id="Q63HN1"/>
<dbReference type="Pharos" id="Q63HN1">
    <property type="development level" value="Tdark"/>
</dbReference>
<dbReference type="PRO" id="PR:Q63HN1"/>
<dbReference type="Proteomes" id="UP000005640">
    <property type="component" value="Unplaced"/>
</dbReference>
<dbReference type="RNAct" id="Q63HN1">
    <property type="molecule type" value="protein"/>
</dbReference>
<dbReference type="InterPro" id="IPR039509">
    <property type="entry name" value="SPATA31"/>
</dbReference>
<dbReference type="PANTHER" id="PTHR21859">
    <property type="entry name" value="ACROSOME-SPECIFIC PROTEIN"/>
    <property type="match status" value="1"/>
</dbReference>
<dbReference type="PANTHER" id="PTHR21859:SF15">
    <property type="entry name" value="PROTEIN SPATA31F1-RELATED"/>
    <property type="match status" value="1"/>
</dbReference>
<dbReference type="Pfam" id="PF14650">
    <property type="entry name" value="FAM75"/>
    <property type="match status" value="2"/>
</dbReference>
<proteinExistence type="uncertain"/>
<comment type="similarity">
    <text evidence="3">Belongs to the SPATA31 family.</text>
</comment>
<comment type="caution">
    <text evidence="3">Could be the product of a pseudogene.</text>
</comment>
<gene>
    <name evidence="4" type="primary">SPATA31F2P</name>
    <name type="synonym">C9orf144</name>
    <name type="synonym">C9orf144A</name>
    <name type="synonym">FAM205B</name>
    <name type="synonym">FAM205BP</name>
</gene>
<reference key="1">
    <citation type="journal article" date="2004" name="Nat. Genet.">
        <title>Complete sequencing and characterization of 21,243 full-length human cDNAs.</title>
        <authorList>
            <person name="Ota T."/>
            <person name="Suzuki Y."/>
            <person name="Nishikawa T."/>
            <person name="Otsuki T."/>
            <person name="Sugiyama T."/>
            <person name="Irie R."/>
            <person name="Wakamatsu A."/>
            <person name="Hayashi K."/>
            <person name="Sato H."/>
            <person name="Nagai K."/>
            <person name="Kimura K."/>
            <person name="Makita H."/>
            <person name="Sekine M."/>
            <person name="Obayashi M."/>
            <person name="Nishi T."/>
            <person name="Shibahara T."/>
            <person name="Tanaka T."/>
            <person name="Ishii S."/>
            <person name="Yamamoto J."/>
            <person name="Saito K."/>
            <person name="Kawai Y."/>
            <person name="Isono Y."/>
            <person name="Nakamura Y."/>
            <person name="Nagahari K."/>
            <person name="Murakami K."/>
            <person name="Yasuda T."/>
            <person name="Iwayanagi T."/>
            <person name="Wagatsuma M."/>
            <person name="Shiratori A."/>
            <person name="Sudo H."/>
            <person name="Hosoiri T."/>
            <person name="Kaku Y."/>
            <person name="Kodaira H."/>
            <person name="Kondo H."/>
            <person name="Sugawara M."/>
            <person name="Takahashi M."/>
            <person name="Kanda K."/>
            <person name="Yokoi T."/>
            <person name="Furuya T."/>
            <person name="Kikkawa E."/>
            <person name="Omura Y."/>
            <person name="Abe K."/>
            <person name="Kamihara K."/>
            <person name="Katsuta N."/>
            <person name="Sato K."/>
            <person name="Tanikawa M."/>
            <person name="Yamazaki M."/>
            <person name="Ninomiya K."/>
            <person name="Ishibashi T."/>
            <person name="Yamashita H."/>
            <person name="Murakawa K."/>
            <person name="Fujimori K."/>
            <person name="Tanai H."/>
            <person name="Kimata M."/>
            <person name="Watanabe M."/>
            <person name="Hiraoka S."/>
            <person name="Chiba Y."/>
            <person name="Ishida S."/>
            <person name="Ono Y."/>
            <person name="Takiguchi S."/>
            <person name="Watanabe S."/>
            <person name="Yosida M."/>
            <person name="Hotuta T."/>
            <person name="Kusano J."/>
            <person name="Kanehori K."/>
            <person name="Takahashi-Fujii A."/>
            <person name="Hara H."/>
            <person name="Tanase T.-O."/>
            <person name="Nomura Y."/>
            <person name="Togiya S."/>
            <person name="Komai F."/>
            <person name="Hara R."/>
            <person name="Takeuchi K."/>
            <person name="Arita M."/>
            <person name="Imose N."/>
            <person name="Musashino K."/>
            <person name="Yuuki H."/>
            <person name="Oshima A."/>
            <person name="Sasaki N."/>
            <person name="Aotsuka S."/>
            <person name="Yoshikawa Y."/>
            <person name="Matsunawa H."/>
            <person name="Ichihara T."/>
            <person name="Shiohata N."/>
            <person name="Sano S."/>
            <person name="Moriya S."/>
            <person name="Momiyama H."/>
            <person name="Satoh N."/>
            <person name="Takami S."/>
            <person name="Terashima Y."/>
            <person name="Suzuki O."/>
            <person name="Nakagawa S."/>
            <person name="Senoh A."/>
            <person name="Mizoguchi H."/>
            <person name="Goto Y."/>
            <person name="Shimizu F."/>
            <person name="Wakebe H."/>
            <person name="Hishigaki H."/>
            <person name="Watanabe T."/>
            <person name="Sugiyama A."/>
            <person name="Takemoto M."/>
            <person name="Kawakami B."/>
            <person name="Yamazaki M."/>
            <person name="Watanabe K."/>
            <person name="Kumagai A."/>
            <person name="Itakura S."/>
            <person name="Fukuzumi Y."/>
            <person name="Fujimori Y."/>
            <person name="Komiyama M."/>
            <person name="Tashiro H."/>
            <person name="Tanigami A."/>
            <person name="Fujiwara T."/>
            <person name="Ono T."/>
            <person name="Yamada K."/>
            <person name="Fujii Y."/>
            <person name="Ozaki K."/>
            <person name="Hirao M."/>
            <person name="Ohmori Y."/>
            <person name="Kawabata A."/>
            <person name="Hikiji T."/>
            <person name="Kobatake N."/>
            <person name="Inagaki H."/>
            <person name="Ikema Y."/>
            <person name="Okamoto S."/>
            <person name="Okitani R."/>
            <person name="Kawakami T."/>
            <person name="Noguchi S."/>
            <person name="Itoh T."/>
            <person name="Shigeta K."/>
            <person name="Senba T."/>
            <person name="Matsumura K."/>
            <person name="Nakajima Y."/>
            <person name="Mizuno T."/>
            <person name="Morinaga M."/>
            <person name="Sasaki M."/>
            <person name="Togashi T."/>
            <person name="Oyama M."/>
            <person name="Hata H."/>
            <person name="Watanabe M."/>
            <person name="Komatsu T."/>
            <person name="Mizushima-Sugano J."/>
            <person name="Satoh T."/>
            <person name="Shirai Y."/>
            <person name="Takahashi Y."/>
            <person name="Nakagawa K."/>
            <person name="Okumura K."/>
            <person name="Nagase T."/>
            <person name="Nomura N."/>
            <person name="Kikuchi H."/>
            <person name="Masuho Y."/>
            <person name="Yamashita R."/>
            <person name="Nakai K."/>
            <person name="Yada T."/>
            <person name="Nakamura Y."/>
            <person name="Ohara O."/>
            <person name="Isogai T."/>
            <person name="Sugano S."/>
        </authorList>
    </citation>
    <scope>NUCLEOTIDE SEQUENCE [LARGE SCALE MRNA]</scope>
    <scope>VARIANT GLU-203</scope>
    <source>
        <tissue>Testis</tissue>
    </source>
</reference>
<reference key="2">
    <citation type="journal article" date="2007" name="BMC Genomics">
        <title>The full-ORF clone resource of the German cDNA consortium.</title>
        <authorList>
            <person name="Bechtel S."/>
            <person name="Rosenfelder H."/>
            <person name="Duda A."/>
            <person name="Schmidt C.P."/>
            <person name="Ernst U."/>
            <person name="Wellenreuther R."/>
            <person name="Mehrle A."/>
            <person name="Schuster C."/>
            <person name="Bahr A."/>
            <person name="Bloecker H."/>
            <person name="Heubner D."/>
            <person name="Hoerlein A."/>
            <person name="Michel G."/>
            <person name="Wedler H."/>
            <person name="Koehrer K."/>
            <person name="Ottenwaelder B."/>
            <person name="Poustka A."/>
            <person name="Wiemann S."/>
            <person name="Schupp I."/>
        </authorList>
    </citation>
    <scope>NUCLEOTIDE SEQUENCE [LARGE SCALE MRNA]</scope>
    <source>
        <tissue>Testis</tissue>
    </source>
</reference>
<reference key="3">
    <citation type="journal article" date="2004" name="Nature">
        <title>DNA sequence and analysis of human chromosome 9.</title>
        <authorList>
            <person name="Humphray S.J."/>
            <person name="Oliver K."/>
            <person name="Hunt A.R."/>
            <person name="Plumb R.W."/>
            <person name="Loveland J.E."/>
            <person name="Howe K.L."/>
            <person name="Andrews T.D."/>
            <person name="Searle S."/>
            <person name="Hunt S.E."/>
            <person name="Scott C.E."/>
            <person name="Jones M.C."/>
            <person name="Ainscough R."/>
            <person name="Almeida J.P."/>
            <person name="Ambrose K.D."/>
            <person name="Ashwell R.I.S."/>
            <person name="Babbage A.K."/>
            <person name="Babbage S."/>
            <person name="Bagguley C.L."/>
            <person name="Bailey J."/>
            <person name="Banerjee R."/>
            <person name="Barker D.J."/>
            <person name="Barlow K.F."/>
            <person name="Bates K."/>
            <person name="Beasley H."/>
            <person name="Beasley O."/>
            <person name="Bird C.P."/>
            <person name="Bray-Allen S."/>
            <person name="Brown A.J."/>
            <person name="Brown J.Y."/>
            <person name="Burford D."/>
            <person name="Burrill W."/>
            <person name="Burton J."/>
            <person name="Carder C."/>
            <person name="Carter N.P."/>
            <person name="Chapman J.C."/>
            <person name="Chen Y."/>
            <person name="Clarke G."/>
            <person name="Clark S.Y."/>
            <person name="Clee C.M."/>
            <person name="Clegg S."/>
            <person name="Collier R.E."/>
            <person name="Corby N."/>
            <person name="Crosier M."/>
            <person name="Cummings A.T."/>
            <person name="Davies J."/>
            <person name="Dhami P."/>
            <person name="Dunn M."/>
            <person name="Dutta I."/>
            <person name="Dyer L.W."/>
            <person name="Earthrowl M.E."/>
            <person name="Faulkner L."/>
            <person name="Fleming C.J."/>
            <person name="Frankish A."/>
            <person name="Frankland J.A."/>
            <person name="French L."/>
            <person name="Fricker D.G."/>
            <person name="Garner P."/>
            <person name="Garnett J."/>
            <person name="Ghori J."/>
            <person name="Gilbert J.G.R."/>
            <person name="Glison C."/>
            <person name="Grafham D.V."/>
            <person name="Gribble S."/>
            <person name="Griffiths C."/>
            <person name="Griffiths-Jones S."/>
            <person name="Grocock R."/>
            <person name="Guy J."/>
            <person name="Hall R.E."/>
            <person name="Hammond S."/>
            <person name="Harley J.L."/>
            <person name="Harrison E.S.I."/>
            <person name="Hart E.A."/>
            <person name="Heath P.D."/>
            <person name="Henderson C.D."/>
            <person name="Hopkins B.L."/>
            <person name="Howard P.J."/>
            <person name="Howden P.J."/>
            <person name="Huckle E."/>
            <person name="Johnson C."/>
            <person name="Johnson D."/>
            <person name="Joy A.A."/>
            <person name="Kay M."/>
            <person name="Keenan S."/>
            <person name="Kershaw J.K."/>
            <person name="Kimberley A.M."/>
            <person name="King A."/>
            <person name="Knights A."/>
            <person name="Laird G.K."/>
            <person name="Langford C."/>
            <person name="Lawlor S."/>
            <person name="Leongamornlert D.A."/>
            <person name="Leversha M."/>
            <person name="Lloyd C."/>
            <person name="Lloyd D.M."/>
            <person name="Lovell J."/>
            <person name="Martin S."/>
            <person name="Mashreghi-Mohammadi M."/>
            <person name="Matthews L."/>
            <person name="McLaren S."/>
            <person name="McLay K.E."/>
            <person name="McMurray A."/>
            <person name="Milne S."/>
            <person name="Nickerson T."/>
            <person name="Nisbett J."/>
            <person name="Nordsiek G."/>
            <person name="Pearce A.V."/>
            <person name="Peck A.I."/>
            <person name="Porter K.M."/>
            <person name="Pandian R."/>
            <person name="Pelan S."/>
            <person name="Phillimore B."/>
            <person name="Povey S."/>
            <person name="Ramsey Y."/>
            <person name="Rand V."/>
            <person name="Scharfe M."/>
            <person name="Sehra H.K."/>
            <person name="Shownkeen R."/>
            <person name="Sims S.K."/>
            <person name="Skuce C.D."/>
            <person name="Smith M."/>
            <person name="Steward C.A."/>
            <person name="Swarbreck D."/>
            <person name="Sycamore N."/>
            <person name="Tester J."/>
            <person name="Thorpe A."/>
            <person name="Tracey A."/>
            <person name="Tromans A."/>
            <person name="Thomas D.W."/>
            <person name="Wall M."/>
            <person name="Wallis J.M."/>
            <person name="West A.P."/>
            <person name="Whitehead S.L."/>
            <person name="Willey D.L."/>
            <person name="Williams S.A."/>
            <person name="Wilming L."/>
            <person name="Wray P.W."/>
            <person name="Young L."/>
            <person name="Ashurst J.L."/>
            <person name="Coulson A."/>
            <person name="Blocker H."/>
            <person name="Durbin R.M."/>
            <person name="Sulston J.E."/>
            <person name="Hubbard T."/>
            <person name="Jackson M.J."/>
            <person name="Bentley D.R."/>
            <person name="Beck S."/>
            <person name="Rogers J."/>
            <person name="Dunham I."/>
        </authorList>
    </citation>
    <scope>NUCLEOTIDE SEQUENCE [LARGE SCALE GENOMIC DNA]</scope>
</reference>
<keyword id="KW-1267">Proteomics identification</keyword>
<keyword id="KW-1185">Reference proteome</keyword>